<comment type="function">
    <text evidence="2">Involved in starvation response and aggregation stage of the life cycle. May be involved in fruiting body morphogenesis and spore formation.</text>
</comment>
<comment type="subcellular location">
    <subcellularLocation>
        <location evidence="4">Cell membrane</location>
        <topology evidence="1">Single-pass membrane protein</topology>
    </subcellularLocation>
</comment>
<comment type="alternative products">
    <event type="alternative splicing"/>
    <isoform>
        <id>B0G168-1</id>
        <name>1</name>
        <sequence type="displayed"/>
    </isoform>
    <isoform>
        <id>B0G168-2</id>
        <name>2</name>
        <sequence type="described" ref="VSP_059868 VSP_059869"/>
    </isoform>
    <isoform>
        <id>B0G168-3</id>
        <name>3</name>
        <sequence type="described" ref="VSP_059870"/>
    </isoform>
</comment>
<comment type="induction">
    <text evidence="2">By starvation. Rapidly and transiently expressed in the first 5 minutes following the removal of nutrients. Expression declines after 30 minutes and is undetectable 2 hr after nutrient removal.</text>
</comment>
<comment type="disruption phenotype">
    <text evidence="2">Cells show no aggregation after 11.5 hr of starvation under submerged conditions in contrast to the wild-type. Cells developed on agar exhibit 2 hr delay in aggregation and the aggregation streams formed after 9 hr are larger than normal leading to over-sized mounds. No significant difference in the time of conversion of mounds to migrating slugs, but the larger slugs formed by the mutant cells often subdivide before forming normal-sized fruiting bodies with an apparently normal proportion of spores and stalk. Grp94 transcript decreases more slowly following starvation compared to rapid within 30 min decrease of it in wild-type. Significantly reduced and delayed expression of the aggregation stage adenylate cyclase acaA and cyclic AMP receptor carA genes. Both are normally expressed shortly after the initiation of differentiation upon starvation and they are necessary for chemotactic aggregation.</text>
</comment>
<keyword id="KW-0025">Alternative splicing</keyword>
<keyword id="KW-1003">Cell membrane</keyword>
<keyword id="KW-0472">Membrane</keyword>
<keyword id="KW-1185">Reference proteome</keyword>
<keyword id="KW-0346">Stress response</keyword>
<keyword id="KW-0812">Transmembrane</keyword>
<keyword id="KW-1133">Transmembrane helix</keyword>
<feature type="chain" id="PRO_0000445439" description="Starvation responsive small protein A">
    <location>
        <begin position="1"/>
        <end position="106"/>
    </location>
</feature>
<feature type="transmembrane region" description="Helical" evidence="1">
    <location>
        <begin position="15"/>
        <end position="32"/>
    </location>
</feature>
<feature type="splice variant" id="VSP_059868" description="In isoform 2." evidence="2">
    <original>VDEKAHIGIGHFFKKR</original>
    <variation>NLITNFFNSNNNNKKQ</variation>
    <location>
        <begin position="42"/>
        <end position="57"/>
    </location>
</feature>
<feature type="splice variant" id="VSP_059869" description="In isoform 2." evidence="2">
    <location>
        <begin position="58"/>
        <end position="106"/>
    </location>
</feature>
<feature type="splice variant" id="VSP_059870" description="In isoform 3." evidence="4">
    <location>
        <begin position="71"/>
        <end position="106"/>
    </location>
</feature>
<evidence type="ECO:0000255" key="1"/>
<evidence type="ECO:0000269" key="2">
    <source>
    </source>
</evidence>
<evidence type="ECO:0000303" key="3">
    <source>
    </source>
</evidence>
<evidence type="ECO:0000305" key="4"/>
<evidence type="ECO:0000312" key="5">
    <source>
        <dbReference type="EMBL" id="BAF47287.1"/>
    </source>
</evidence>
<evidence type="ECO:0000312" key="6">
    <source>
        <dbReference type="EMBL" id="EDR41041.1"/>
    </source>
</evidence>
<evidence type="ECO:0000312" key="7">
    <source>
        <dbReference type="EMBL" id="EDR41042.1"/>
    </source>
</evidence>
<evidence type="ECO:0000312" key="8">
    <source>
        <dbReference type="Proteomes" id="UP000002195"/>
    </source>
</evidence>
<protein>
    <recommendedName>
        <fullName evidence="3">Starvation responsive small protein A</fullName>
    </recommendedName>
</protein>
<reference evidence="5" key="1">
    <citation type="journal article" date="2008" name="Differentiation">
        <title>An immediate-early gene, srsA: its involvement in the starvation response that initiates differentiation of Dictyostelium cells.</title>
        <authorList>
            <person name="Sasaki K."/>
            <person name="Chae S.C."/>
            <person name="Loomis W.F."/>
            <person name="Iranfar N."/>
            <person name="Amagai A."/>
            <person name="Maeda Y."/>
        </authorList>
    </citation>
    <scope>NUCLEOTIDE SEQUENCE [MRNA] (ISOFORM 2)</scope>
    <scope>FUNCTION</scope>
    <scope>INDUCTION</scope>
    <scope>DISRUPTION PHENOTYPE</scope>
    <source>
        <strain evidence="3">AX2</strain>
    </source>
</reference>
<reference evidence="6 7 8" key="2">
    <citation type="journal article" date="2005" name="Nature">
        <title>The genome of the social amoeba Dictyostelium discoideum.</title>
        <authorList>
            <person name="Eichinger L."/>
            <person name="Pachebat J.A."/>
            <person name="Gloeckner G."/>
            <person name="Rajandream M.A."/>
            <person name="Sucgang R."/>
            <person name="Berriman M."/>
            <person name="Song J."/>
            <person name="Olsen R."/>
            <person name="Szafranski K."/>
            <person name="Xu Q."/>
            <person name="Tunggal B."/>
            <person name="Kummerfeld S."/>
            <person name="Madera M."/>
            <person name="Konfortov B.A."/>
            <person name="Rivero F."/>
            <person name="Bankier A.T."/>
            <person name="Lehmann R."/>
            <person name="Hamlin N."/>
            <person name="Davies R."/>
            <person name="Gaudet P."/>
            <person name="Fey P."/>
            <person name="Pilcher K."/>
            <person name="Chen G."/>
            <person name="Saunders D."/>
            <person name="Sodergren E.J."/>
            <person name="Davis P."/>
            <person name="Kerhornou A."/>
            <person name="Nie X."/>
            <person name="Hall N."/>
            <person name="Anjard C."/>
            <person name="Hemphill L."/>
            <person name="Bason N."/>
            <person name="Farbrother P."/>
            <person name="Desany B."/>
            <person name="Just E."/>
            <person name="Morio T."/>
            <person name="Rost R."/>
            <person name="Churcher C.M."/>
            <person name="Cooper J."/>
            <person name="Haydock S."/>
            <person name="van Driessche N."/>
            <person name="Cronin A."/>
            <person name="Goodhead I."/>
            <person name="Muzny D.M."/>
            <person name="Mourier T."/>
            <person name="Pain A."/>
            <person name="Lu M."/>
            <person name="Harper D."/>
            <person name="Lindsay R."/>
            <person name="Hauser H."/>
            <person name="James K.D."/>
            <person name="Quiles M."/>
            <person name="Madan Babu M."/>
            <person name="Saito T."/>
            <person name="Buchrieser C."/>
            <person name="Wardroper A."/>
            <person name="Felder M."/>
            <person name="Thangavelu M."/>
            <person name="Johnson D."/>
            <person name="Knights A."/>
            <person name="Loulseged H."/>
            <person name="Mungall K.L."/>
            <person name="Oliver K."/>
            <person name="Price C."/>
            <person name="Quail M.A."/>
            <person name="Urushihara H."/>
            <person name="Hernandez J."/>
            <person name="Rabbinowitsch E."/>
            <person name="Steffen D."/>
            <person name="Sanders M."/>
            <person name="Ma J."/>
            <person name="Kohara Y."/>
            <person name="Sharp S."/>
            <person name="Simmonds M.N."/>
            <person name="Spiegler S."/>
            <person name="Tivey A."/>
            <person name="Sugano S."/>
            <person name="White B."/>
            <person name="Walker D."/>
            <person name="Woodward J.R."/>
            <person name="Winckler T."/>
            <person name="Tanaka Y."/>
            <person name="Shaulsky G."/>
            <person name="Schleicher M."/>
            <person name="Weinstock G.M."/>
            <person name="Rosenthal A."/>
            <person name="Cox E.C."/>
            <person name="Chisholm R.L."/>
            <person name="Gibbs R.A."/>
            <person name="Loomis W.F."/>
            <person name="Platzer M."/>
            <person name="Kay R.R."/>
            <person name="Williams J.G."/>
            <person name="Dear P.H."/>
            <person name="Noegel A.A."/>
            <person name="Barrell B.G."/>
            <person name="Kuspa A."/>
        </authorList>
    </citation>
    <scope>NUCLEOTIDE SEQUENCE [LARGE SCALE GENOMIC DNA]</scope>
    <source>
        <strain evidence="6 7 8">AX4</strain>
    </source>
</reference>
<dbReference type="EMBL" id="AB292732">
    <property type="protein sequence ID" value="BAF47287.1"/>
    <property type="molecule type" value="mRNA"/>
</dbReference>
<dbReference type="EMBL" id="AAFI02000141">
    <property type="protein sequence ID" value="EDR41041.1"/>
    <property type="molecule type" value="Genomic_DNA"/>
</dbReference>
<dbReference type="EMBL" id="AAFI02000141">
    <property type="protein sequence ID" value="EDR41042.1"/>
    <property type="molecule type" value="Genomic_DNA"/>
</dbReference>
<dbReference type="RefSeq" id="XP_001733031.1">
    <property type="nucleotide sequence ID" value="XM_001732979.1"/>
</dbReference>
<dbReference type="RefSeq" id="XP_001733032.1">
    <property type="nucleotide sequence ID" value="XM_001732980.1"/>
</dbReference>
<dbReference type="FunCoup" id="B0G168">
    <property type="interactions" value="243"/>
</dbReference>
<dbReference type="STRING" id="44689.B0G168"/>
<dbReference type="PaxDb" id="44689-DDB0237692"/>
<dbReference type="EnsemblProtists" id="EDR41041">
    <property type="protein sequence ID" value="EDR41041"/>
    <property type="gene ID" value="DDB_G0289521"/>
</dbReference>
<dbReference type="EnsemblProtists" id="EDR41042">
    <property type="protein sequence ID" value="EDR41042"/>
    <property type="gene ID" value="DDB_G0289521"/>
</dbReference>
<dbReference type="GeneID" id="8627189"/>
<dbReference type="KEGG" id="ddi:DDB_G0289521"/>
<dbReference type="dictyBase" id="DDB_G0289521">
    <property type="gene designation" value="srsA"/>
</dbReference>
<dbReference type="VEuPathDB" id="AmoebaDB:DDB_G0289521"/>
<dbReference type="eggNOG" id="ENOG502RIIM">
    <property type="taxonomic scope" value="Eukaryota"/>
</dbReference>
<dbReference type="HOGENOM" id="CLU_2228248_0_0_1"/>
<dbReference type="InParanoid" id="B0G168"/>
<dbReference type="OMA" id="IGIGHFF"/>
<dbReference type="PRO" id="PR:B0G168"/>
<dbReference type="Proteomes" id="UP000002195">
    <property type="component" value="Chromosome 5"/>
</dbReference>
<dbReference type="GO" id="GO:0005886">
    <property type="term" value="C:plasma membrane"/>
    <property type="evidence" value="ECO:0007669"/>
    <property type="project" value="UniProtKB-SubCell"/>
</dbReference>
<dbReference type="GO" id="GO:0031152">
    <property type="term" value="P:aggregation involved in sorocarp development"/>
    <property type="evidence" value="ECO:0000315"/>
    <property type="project" value="dictyBase"/>
</dbReference>
<dbReference type="GO" id="GO:0098743">
    <property type="term" value="P:cell aggregation"/>
    <property type="evidence" value="ECO:0000315"/>
    <property type="project" value="UniProtKB"/>
</dbReference>
<dbReference type="GO" id="GO:0006355">
    <property type="term" value="P:regulation of DNA-templated transcription"/>
    <property type="evidence" value="ECO:0000315"/>
    <property type="project" value="UniProtKB"/>
</dbReference>
<dbReference type="GO" id="GO:1902351">
    <property type="term" value="P:response to imidacloprid"/>
    <property type="evidence" value="ECO:0000270"/>
    <property type="project" value="dictyBase"/>
</dbReference>
<dbReference type="GO" id="GO:0042594">
    <property type="term" value="P:response to starvation"/>
    <property type="evidence" value="ECO:0000315"/>
    <property type="project" value="dictyBase"/>
</dbReference>
<dbReference type="GO" id="GO:0099120">
    <property type="term" value="P:socially cooperative development"/>
    <property type="evidence" value="ECO:0000270"/>
    <property type="project" value="UniProtKB"/>
</dbReference>
<dbReference type="GO" id="GO:0031288">
    <property type="term" value="P:sorocarp morphogenesis"/>
    <property type="evidence" value="ECO:0000315"/>
    <property type="project" value="dictyBase"/>
</dbReference>
<dbReference type="GO" id="GO:0030435">
    <property type="term" value="P:sporulation resulting in formation of a cellular spore"/>
    <property type="evidence" value="ECO:0000315"/>
    <property type="project" value="dictyBase"/>
</dbReference>
<proteinExistence type="evidence at transcript level"/>
<name>SRSA_DICDI</name>
<accession>B0G168</accession>
<accession>A2V850</accession>
<organism evidence="8">
    <name type="scientific">Dictyostelium discoideum</name>
    <name type="common">Social amoeba</name>
    <dbReference type="NCBI Taxonomy" id="44689"/>
    <lineage>
        <taxon>Eukaryota</taxon>
        <taxon>Amoebozoa</taxon>
        <taxon>Evosea</taxon>
        <taxon>Eumycetozoa</taxon>
        <taxon>Dictyostelia</taxon>
        <taxon>Dictyosteliales</taxon>
        <taxon>Dictyosteliaceae</taxon>
        <taxon>Dictyostelium</taxon>
    </lineage>
</organism>
<gene>
    <name evidence="3" type="primary">srsA</name>
    <name evidence="6 7" type="ORF">DDB_G0289521</name>
</gene>
<sequence length="106" mass="12100">MIAKVFKSITPESYILLVNAGLISAYGVRIIFQSVKNDEGKVDEKAHIGIGHFFKKRGAQLVDGKNLTDILKEKKKKKKKKKKINISNKLIIFKISRQLYSKLKLK</sequence>